<name>LEU1_YERPE</name>
<accession>Q8ZIG8</accession>
<accession>Q0WJD3</accession>
<proteinExistence type="inferred from homology"/>
<gene>
    <name evidence="1" type="primary">leuA</name>
    <name type="ordered locus">YPO0533</name>
    <name type="ordered locus">y3645</name>
    <name type="ordered locus">YP_3649</name>
</gene>
<keyword id="KW-0028">Amino-acid biosynthesis</keyword>
<keyword id="KW-0100">Branched-chain amino acid biosynthesis</keyword>
<keyword id="KW-0963">Cytoplasm</keyword>
<keyword id="KW-0432">Leucine biosynthesis</keyword>
<keyword id="KW-0464">Manganese</keyword>
<keyword id="KW-0479">Metal-binding</keyword>
<keyword id="KW-1185">Reference proteome</keyword>
<keyword id="KW-0808">Transferase</keyword>
<comment type="function">
    <text evidence="1">Catalyzes the condensation of the acetyl group of acetyl-CoA with 3-methyl-2-oxobutanoate (2-ketoisovalerate) to form 3-carboxy-3-hydroxy-4-methylpentanoate (2-isopropylmalate).</text>
</comment>
<comment type="catalytic activity">
    <reaction evidence="1">
        <text>3-methyl-2-oxobutanoate + acetyl-CoA + H2O = (2S)-2-isopropylmalate + CoA + H(+)</text>
        <dbReference type="Rhea" id="RHEA:21524"/>
        <dbReference type="ChEBI" id="CHEBI:1178"/>
        <dbReference type="ChEBI" id="CHEBI:11851"/>
        <dbReference type="ChEBI" id="CHEBI:15377"/>
        <dbReference type="ChEBI" id="CHEBI:15378"/>
        <dbReference type="ChEBI" id="CHEBI:57287"/>
        <dbReference type="ChEBI" id="CHEBI:57288"/>
        <dbReference type="EC" id="2.3.3.13"/>
    </reaction>
</comment>
<comment type="cofactor">
    <cofactor evidence="1">
        <name>Mn(2+)</name>
        <dbReference type="ChEBI" id="CHEBI:29035"/>
    </cofactor>
</comment>
<comment type="pathway">
    <text evidence="1">Amino-acid biosynthesis; L-leucine biosynthesis; L-leucine from 3-methyl-2-oxobutanoate: step 1/4.</text>
</comment>
<comment type="subunit">
    <text evidence="1">Homodimer.</text>
</comment>
<comment type="subcellular location">
    <subcellularLocation>
        <location evidence="1">Cytoplasm</location>
    </subcellularLocation>
</comment>
<comment type="similarity">
    <text evidence="1">Belongs to the alpha-IPM synthase/homocitrate synthase family. LeuA type 1 subfamily.</text>
</comment>
<feature type="chain" id="PRO_0000140404" description="2-isopropylmalate synthase">
    <location>
        <begin position="1"/>
        <end position="520"/>
    </location>
</feature>
<feature type="domain" description="Pyruvate carboxyltransferase" evidence="1">
    <location>
        <begin position="5"/>
        <end position="267"/>
    </location>
</feature>
<feature type="region of interest" description="Regulatory domain" evidence="1">
    <location>
        <begin position="392"/>
        <end position="520"/>
    </location>
</feature>
<feature type="binding site" evidence="1">
    <location>
        <position position="14"/>
    </location>
    <ligand>
        <name>Mn(2+)</name>
        <dbReference type="ChEBI" id="CHEBI:29035"/>
    </ligand>
</feature>
<feature type="binding site" evidence="1">
    <location>
        <position position="202"/>
    </location>
    <ligand>
        <name>Mn(2+)</name>
        <dbReference type="ChEBI" id="CHEBI:29035"/>
    </ligand>
</feature>
<feature type="binding site" evidence="1">
    <location>
        <position position="204"/>
    </location>
    <ligand>
        <name>Mn(2+)</name>
        <dbReference type="ChEBI" id="CHEBI:29035"/>
    </ligand>
</feature>
<feature type="binding site" evidence="1">
    <location>
        <position position="238"/>
    </location>
    <ligand>
        <name>Mn(2+)</name>
        <dbReference type="ChEBI" id="CHEBI:29035"/>
    </ligand>
</feature>
<feature type="sequence conflict" description="In Ref. 2; AAM87193." evidence="2" ref="2">
    <original>T</original>
    <variation>P</variation>
    <location>
        <position position="176"/>
    </location>
</feature>
<evidence type="ECO:0000255" key="1">
    <source>
        <dbReference type="HAMAP-Rule" id="MF_01025"/>
    </source>
</evidence>
<evidence type="ECO:0000305" key="2"/>
<organism>
    <name type="scientific">Yersinia pestis</name>
    <dbReference type="NCBI Taxonomy" id="632"/>
    <lineage>
        <taxon>Bacteria</taxon>
        <taxon>Pseudomonadati</taxon>
        <taxon>Pseudomonadota</taxon>
        <taxon>Gammaproteobacteria</taxon>
        <taxon>Enterobacterales</taxon>
        <taxon>Yersiniaceae</taxon>
        <taxon>Yersinia</taxon>
    </lineage>
</organism>
<dbReference type="EC" id="2.3.3.13" evidence="1"/>
<dbReference type="EMBL" id="AL590842">
    <property type="protein sequence ID" value="CAL19213.1"/>
    <property type="molecule type" value="Genomic_DNA"/>
</dbReference>
<dbReference type="EMBL" id="AE009952">
    <property type="protein sequence ID" value="AAM87193.1"/>
    <property type="molecule type" value="Genomic_DNA"/>
</dbReference>
<dbReference type="EMBL" id="AE017042">
    <property type="protein sequence ID" value="AAS63797.1"/>
    <property type="molecule type" value="Genomic_DNA"/>
</dbReference>
<dbReference type="PIR" id="AC0066">
    <property type="entry name" value="AC0066"/>
</dbReference>
<dbReference type="RefSeq" id="WP_002210453.1">
    <property type="nucleotide sequence ID" value="NZ_WHLN01000026.1"/>
</dbReference>
<dbReference type="RefSeq" id="YP_002345605.1">
    <property type="nucleotide sequence ID" value="NC_003143.1"/>
</dbReference>
<dbReference type="SMR" id="Q8ZIG8"/>
<dbReference type="STRING" id="214092.YPO0533"/>
<dbReference type="PaxDb" id="214092-YPO0533"/>
<dbReference type="DNASU" id="1148592"/>
<dbReference type="EnsemblBacteria" id="AAS63797">
    <property type="protein sequence ID" value="AAS63797"/>
    <property type="gene ID" value="YP_3649"/>
</dbReference>
<dbReference type="GeneID" id="57974079"/>
<dbReference type="KEGG" id="ype:YPO0533"/>
<dbReference type="KEGG" id="ypk:y3645"/>
<dbReference type="KEGG" id="ypm:YP_3649"/>
<dbReference type="PATRIC" id="fig|214092.21.peg.786"/>
<dbReference type="eggNOG" id="COG0119">
    <property type="taxonomic scope" value="Bacteria"/>
</dbReference>
<dbReference type="HOGENOM" id="CLU_022158_0_1_6"/>
<dbReference type="OMA" id="NTMRMLV"/>
<dbReference type="OrthoDB" id="9803573at2"/>
<dbReference type="UniPathway" id="UPA00048">
    <property type="reaction ID" value="UER00070"/>
</dbReference>
<dbReference type="Proteomes" id="UP000000815">
    <property type="component" value="Chromosome"/>
</dbReference>
<dbReference type="Proteomes" id="UP000001019">
    <property type="component" value="Chromosome"/>
</dbReference>
<dbReference type="Proteomes" id="UP000002490">
    <property type="component" value="Chromosome"/>
</dbReference>
<dbReference type="GO" id="GO:0005829">
    <property type="term" value="C:cytosol"/>
    <property type="evidence" value="ECO:0000318"/>
    <property type="project" value="GO_Central"/>
</dbReference>
<dbReference type="GO" id="GO:0003852">
    <property type="term" value="F:2-isopropylmalate synthase activity"/>
    <property type="evidence" value="ECO:0000318"/>
    <property type="project" value="GO_Central"/>
</dbReference>
<dbReference type="GO" id="GO:0003985">
    <property type="term" value="F:acetyl-CoA C-acetyltransferase activity"/>
    <property type="evidence" value="ECO:0007669"/>
    <property type="project" value="UniProtKB-UniRule"/>
</dbReference>
<dbReference type="GO" id="GO:0030145">
    <property type="term" value="F:manganese ion binding"/>
    <property type="evidence" value="ECO:0007669"/>
    <property type="project" value="UniProtKB-UniRule"/>
</dbReference>
<dbReference type="GO" id="GO:0009098">
    <property type="term" value="P:L-leucine biosynthetic process"/>
    <property type="evidence" value="ECO:0000318"/>
    <property type="project" value="GO_Central"/>
</dbReference>
<dbReference type="CDD" id="cd07940">
    <property type="entry name" value="DRE_TIM_IPMS"/>
    <property type="match status" value="1"/>
</dbReference>
<dbReference type="FunFam" id="1.10.238.260:FF:000001">
    <property type="entry name" value="2-isopropylmalate synthase"/>
    <property type="match status" value="1"/>
</dbReference>
<dbReference type="FunFam" id="3.20.20.70:FF:000010">
    <property type="entry name" value="2-isopropylmalate synthase"/>
    <property type="match status" value="1"/>
</dbReference>
<dbReference type="FunFam" id="3.30.160.270:FF:000001">
    <property type="entry name" value="2-isopropylmalate synthase"/>
    <property type="match status" value="1"/>
</dbReference>
<dbReference type="Gene3D" id="1.10.238.260">
    <property type="match status" value="1"/>
</dbReference>
<dbReference type="Gene3D" id="3.30.160.270">
    <property type="match status" value="1"/>
</dbReference>
<dbReference type="Gene3D" id="3.20.20.70">
    <property type="entry name" value="Aldolase class I"/>
    <property type="match status" value="1"/>
</dbReference>
<dbReference type="HAMAP" id="MF_01025">
    <property type="entry name" value="LeuA_type1"/>
    <property type="match status" value="1"/>
</dbReference>
<dbReference type="InterPro" id="IPR050073">
    <property type="entry name" value="2-IPM_HCS-like"/>
</dbReference>
<dbReference type="InterPro" id="IPR013709">
    <property type="entry name" value="2-isopropylmalate_synth_dimer"/>
</dbReference>
<dbReference type="InterPro" id="IPR002034">
    <property type="entry name" value="AIPM/Hcit_synth_CS"/>
</dbReference>
<dbReference type="InterPro" id="IPR013785">
    <property type="entry name" value="Aldolase_TIM"/>
</dbReference>
<dbReference type="InterPro" id="IPR054691">
    <property type="entry name" value="LeuA/HCS_post-cat"/>
</dbReference>
<dbReference type="InterPro" id="IPR036230">
    <property type="entry name" value="LeuA_allosteric_dom_sf"/>
</dbReference>
<dbReference type="InterPro" id="IPR005671">
    <property type="entry name" value="LeuA_bact_synth"/>
</dbReference>
<dbReference type="InterPro" id="IPR000891">
    <property type="entry name" value="PYR_CT"/>
</dbReference>
<dbReference type="NCBIfam" id="TIGR00973">
    <property type="entry name" value="leuA_bact"/>
    <property type="match status" value="1"/>
</dbReference>
<dbReference type="NCBIfam" id="NF002084">
    <property type="entry name" value="PRK00915.1-1"/>
    <property type="match status" value="1"/>
</dbReference>
<dbReference type="NCBIfam" id="NF002086">
    <property type="entry name" value="PRK00915.1-3"/>
    <property type="match status" value="1"/>
</dbReference>
<dbReference type="PANTHER" id="PTHR10277:SF9">
    <property type="entry name" value="2-ISOPROPYLMALATE SYNTHASE 1, CHLOROPLASTIC-RELATED"/>
    <property type="match status" value="1"/>
</dbReference>
<dbReference type="PANTHER" id="PTHR10277">
    <property type="entry name" value="HOMOCITRATE SYNTHASE-RELATED"/>
    <property type="match status" value="1"/>
</dbReference>
<dbReference type="Pfam" id="PF22617">
    <property type="entry name" value="HCS_D2"/>
    <property type="match status" value="1"/>
</dbReference>
<dbReference type="Pfam" id="PF00682">
    <property type="entry name" value="HMGL-like"/>
    <property type="match status" value="1"/>
</dbReference>
<dbReference type="Pfam" id="PF08502">
    <property type="entry name" value="LeuA_dimer"/>
    <property type="match status" value="1"/>
</dbReference>
<dbReference type="SMART" id="SM00917">
    <property type="entry name" value="LeuA_dimer"/>
    <property type="match status" value="1"/>
</dbReference>
<dbReference type="SUPFAM" id="SSF110921">
    <property type="entry name" value="2-isopropylmalate synthase LeuA, allosteric (dimerisation) domain"/>
    <property type="match status" value="1"/>
</dbReference>
<dbReference type="SUPFAM" id="SSF51569">
    <property type="entry name" value="Aldolase"/>
    <property type="match status" value="1"/>
</dbReference>
<dbReference type="PROSITE" id="PS00815">
    <property type="entry name" value="AIPM_HOMOCIT_SYNTH_1"/>
    <property type="match status" value="1"/>
</dbReference>
<dbReference type="PROSITE" id="PS00816">
    <property type="entry name" value="AIPM_HOMOCIT_SYNTH_2"/>
    <property type="match status" value="1"/>
</dbReference>
<dbReference type="PROSITE" id="PS50991">
    <property type="entry name" value="PYR_CT"/>
    <property type="match status" value="1"/>
</dbReference>
<sequence length="520" mass="57375">MSQQVIIFDTTLRDGEQALQASLSVKEKLQIALALERMGVDIMEVGFPVSSPGDFESVRTIAQQVKNSRVCALARCVDKDIDVAAEALRIAEAFRIHVFLATSTLHIESKLKRSFDDVLAMAVHSVKRARNYTDDVEFSCEDAGRTPIDNLCRVVEAAITAGATTINIPDTVGYTTPYQFGGIITDLYERVPNIDKAIISVHCHDDLGMSVANSITAVQAGARQVEGTINGLGERAGNCSLEEVIMAIKVRHEMLGVHTNINHQEIYRTSQLVSKICNMPIPGNKAIVGSNAFAHSSGIHQDGVLKNRENYEIMTPESIGLKEVQLNLTSRSGRAAVKHRMEEMGYQDKDYNLDSLYDAFLKLADKKGQVFDYDLEALAFINKQQEEPEYYRLDYFSVQSGSSVMATASVKLVCGEEIKSEAATGNGPVDAVYQAINRITDYPIELVKYQLSAKGQGKDALGQVDIVVDHKGRRFHGVGLATDIVESSAKALVHVLNNIWRAHQVEKEKQRLQQNNQEMV</sequence>
<protein>
    <recommendedName>
        <fullName evidence="1">2-isopropylmalate synthase</fullName>
        <ecNumber evidence="1">2.3.3.13</ecNumber>
    </recommendedName>
    <alternativeName>
        <fullName evidence="1">Alpha-IPM synthase</fullName>
    </alternativeName>
    <alternativeName>
        <fullName evidence="1">Alpha-isopropylmalate synthase</fullName>
    </alternativeName>
</protein>
<reference key="1">
    <citation type="journal article" date="2001" name="Nature">
        <title>Genome sequence of Yersinia pestis, the causative agent of plague.</title>
        <authorList>
            <person name="Parkhill J."/>
            <person name="Wren B.W."/>
            <person name="Thomson N.R."/>
            <person name="Titball R.W."/>
            <person name="Holden M.T.G."/>
            <person name="Prentice M.B."/>
            <person name="Sebaihia M."/>
            <person name="James K.D."/>
            <person name="Churcher C.M."/>
            <person name="Mungall K.L."/>
            <person name="Baker S."/>
            <person name="Basham D."/>
            <person name="Bentley S.D."/>
            <person name="Brooks K."/>
            <person name="Cerdeno-Tarraga A.-M."/>
            <person name="Chillingworth T."/>
            <person name="Cronin A."/>
            <person name="Davies R.M."/>
            <person name="Davis P."/>
            <person name="Dougan G."/>
            <person name="Feltwell T."/>
            <person name="Hamlin N."/>
            <person name="Holroyd S."/>
            <person name="Jagels K."/>
            <person name="Karlyshev A.V."/>
            <person name="Leather S."/>
            <person name="Moule S."/>
            <person name="Oyston P.C.F."/>
            <person name="Quail M.A."/>
            <person name="Rutherford K.M."/>
            <person name="Simmonds M."/>
            <person name="Skelton J."/>
            <person name="Stevens K."/>
            <person name="Whitehead S."/>
            <person name="Barrell B.G."/>
        </authorList>
    </citation>
    <scope>NUCLEOTIDE SEQUENCE [LARGE SCALE GENOMIC DNA]</scope>
    <source>
        <strain>CO-92 / Biovar Orientalis</strain>
    </source>
</reference>
<reference key="2">
    <citation type="journal article" date="2002" name="J. Bacteriol.">
        <title>Genome sequence of Yersinia pestis KIM.</title>
        <authorList>
            <person name="Deng W."/>
            <person name="Burland V."/>
            <person name="Plunkett G. III"/>
            <person name="Boutin A."/>
            <person name="Mayhew G.F."/>
            <person name="Liss P."/>
            <person name="Perna N.T."/>
            <person name="Rose D.J."/>
            <person name="Mau B."/>
            <person name="Zhou S."/>
            <person name="Schwartz D.C."/>
            <person name="Fetherston J.D."/>
            <person name="Lindler L.E."/>
            <person name="Brubaker R.R."/>
            <person name="Plano G.V."/>
            <person name="Straley S.C."/>
            <person name="McDonough K.A."/>
            <person name="Nilles M.L."/>
            <person name="Matson J.S."/>
            <person name="Blattner F.R."/>
            <person name="Perry R.D."/>
        </authorList>
    </citation>
    <scope>NUCLEOTIDE SEQUENCE [LARGE SCALE GENOMIC DNA]</scope>
    <source>
        <strain>KIM10+ / Biovar Mediaevalis</strain>
    </source>
</reference>
<reference key="3">
    <citation type="journal article" date="2004" name="DNA Res.">
        <title>Complete genome sequence of Yersinia pestis strain 91001, an isolate avirulent to humans.</title>
        <authorList>
            <person name="Song Y."/>
            <person name="Tong Z."/>
            <person name="Wang J."/>
            <person name="Wang L."/>
            <person name="Guo Z."/>
            <person name="Han Y."/>
            <person name="Zhang J."/>
            <person name="Pei D."/>
            <person name="Zhou D."/>
            <person name="Qin H."/>
            <person name="Pang X."/>
            <person name="Han Y."/>
            <person name="Zhai J."/>
            <person name="Li M."/>
            <person name="Cui B."/>
            <person name="Qi Z."/>
            <person name="Jin L."/>
            <person name="Dai R."/>
            <person name="Chen F."/>
            <person name="Li S."/>
            <person name="Ye C."/>
            <person name="Du Z."/>
            <person name="Lin W."/>
            <person name="Wang J."/>
            <person name="Yu J."/>
            <person name="Yang H."/>
            <person name="Wang J."/>
            <person name="Huang P."/>
            <person name="Yang R."/>
        </authorList>
    </citation>
    <scope>NUCLEOTIDE SEQUENCE [LARGE SCALE GENOMIC DNA]</scope>
    <source>
        <strain>91001 / Biovar Mediaevalis</strain>
    </source>
</reference>